<comment type="function">
    <text evidence="1">Involved in the biogenesis of TorA. Acts on TorA before the insertion of the molybdenum cofactor and, as a result, probably favors a conformation of the apoenzyme that is competent for acquiring the cofactor.</text>
</comment>
<comment type="subcellular location">
    <subcellularLocation>
        <location evidence="1">Cytoplasm</location>
    </subcellularLocation>
</comment>
<comment type="similarity">
    <text evidence="1">Belongs to the TorD/DmsD family. TorD subfamily.</text>
</comment>
<accession>B5FME2</accession>
<reference key="1">
    <citation type="journal article" date="2011" name="J. Bacteriol.">
        <title>Comparative genomics of 28 Salmonella enterica isolates: evidence for CRISPR-mediated adaptive sublineage evolution.</title>
        <authorList>
            <person name="Fricke W.F."/>
            <person name="Mammel M.K."/>
            <person name="McDermott P.F."/>
            <person name="Tartera C."/>
            <person name="White D.G."/>
            <person name="Leclerc J.E."/>
            <person name="Ravel J."/>
            <person name="Cebula T.A."/>
        </authorList>
    </citation>
    <scope>NUCLEOTIDE SEQUENCE [LARGE SCALE GENOMIC DNA]</scope>
    <source>
        <strain>CT_02021853</strain>
    </source>
</reference>
<gene>
    <name evidence="1" type="primary">torD</name>
    <name type="ordered locus">SeD_A4211</name>
</gene>
<proteinExistence type="inferred from homology"/>
<sequence>MIKQPALAQEQYACVYAWLALLFFREVDDEGLIQLQSAEIADWLALLKRQPALAASVALLEQKIAALSLRQDAQLELAADFCGLFLMTDKKSALPYASQYPQQEPGMIKHLLLEAGMEVNDDFKEPADHLAIYLELLSHLHFSLGESFQQRRMNKLRQKTLSSLLEWLPEFTNNCLKHDPYGFYAALSQLLLAIVRFDDGKEDLSIVAVE</sequence>
<dbReference type="EMBL" id="CP001144">
    <property type="protein sequence ID" value="ACH75716.1"/>
    <property type="molecule type" value="Genomic_DNA"/>
</dbReference>
<dbReference type="RefSeq" id="WP_000595416.1">
    <property type="nucleotide sequence ID" value="NC_011205.1"/>
</dbReference>
<dbReference type="SMR" id="B5FME2"/>
<dbReference type="KEGG" id="sed:SeD_A4211"/>
<dbReference type="HOGENOM" id="CLU_077650_4_0_6"/>
<dbReference type="Proteomes" id="UP000008322">
    <property type="component" value="Chromosome"/>
</dbReference>
<dbReference type="GO" id="GO:0005737">
    <property type="term" value="C:cytoplasm"/>
    <property type="evidence" value="ECO:0007669"/>
    <property type="project" value="UniProtKB-SubCell"/>
</dbReference>
<dbReference type="GO" id="GO:0051259">
    <property type="term" value="P:protein complex oligomerization"/>
    <property type="evidence" value="ECO:0007669"/>
    <property type="project" value="InterPro"/>
</dbReference>
<dbReference type="GO" id="GO:0006457">
    <property type="term" value="P:protein folding"/>
    <property type="evidence" value="ECO:0007669"/>
    <property type="project" value="UniProtKB-UniRule"/>
</dbReference>
<dbReference type="Gene3D" id="1.20.120.1820">
    <property type="match status" value="1"/>
</dbReference>
<dbReference type="Gene3D" id="1.20.1280.20">
    <property type="entry name" value="HscB, C-terminal domain"/>
    <property type="match status" value="1"/>
</dbReference>
<dbReference type="HAMAP" id="MF_01150">
    <property type="entry name" value="TorD"/>
    <property type="match status" value="1"/>
</dbReference>
<dbReference type="InterPro" id="IPR023069">
    <property type="entry name" value="Chaperone_TorD"/>
</dbReference>
<dbReference type="InterPro" id="IPR020945">
    <property type="entry name" value="DMSO/NO3_reduct_chaperone"/>
</dbReference>
<dbReference type="InterPro" id="IPR036386">
    <property type="entry name" value="HscB_C_sf"/>
</dbReference>
<dbReference type="InterPro" id="IPR036411">
    <property type="entry name" value="TorD-like_sf"/>
</dbReference>
<dbReference type="InterPro" id="IPR050289">
    <property type="entry name" value="TorD/DmsD_chaperones"/>
</dbReference>
<dbReference type="NCBIfam" id="NF003442">
    <property type="entry name" value="PRK04976.1"/>
    <property type="match status" value="1"/>
</dbReference>
<dbReference type="PANTHER" id="PTHR34227:SF11">
    <property type="entry name" value="CHAPERONE PROTEIN TORD"/>
    <property type="match status" value="1"/>
</dbReference>
<dbReference type="PANTHER" id="PTHR34227">
    <property type="entry name" value="CHAPERONE PROTEIN YCDY"/>
    <property type="match status" value="1"/>
</dbReference>
<dbReference type="Pfam" id="PF02613">
    <property type="entry name" value="Nitrate_red_del"/>
    <property type="match status" value="1"/>
</dbReference>
<dbReference type="SUPFAM" id="SSF89155">
    <property type="entry name" value="TorD-like"/>
    <property type="match status" value="1"/>
</dbReference>
<organism>
    <name type="scientific">Salmonella dublin (strain CT_02021853)</name>
    <dbReference type="NCBI Taxonomy" id="439851"/>
    <lineage>
        <taxon>Bacteria</taxon>
        <taxon>Pseudomonadati</taxon>
        <taxon>Pseudomonadota</taxon>
        <taxon>Gammaproteobacteria</taxon>
        <taxon>Enterobacterales</taxon>
        <taxon>Enterobacteriaceae</taxon>
        <taxon>Salmonella</taxon>
    </lineage>
</organism>
<protein>
    <recommendedName>
        <fullName evidence="1">Chaperone protein TorD</fullName>
    </recommendedName>
</protein>
<keyword id="KW-0143">Chaperone</keyword>
<keyword id="KW-0963">Cytoplasm</keyword>
<name>TORD_SALDC</name>
<evidence type="ECO:0000255" key="1">
    <source>
        <dbReference type="HAMAP-Rule" id="MF_01150"/>
    </source>
</evidence>
<feature type="chain" id="PRO_1000137512" description="Chaperone protein TorD">
    <location>
        <begin position="1"/>
        <end position="210"/>
    </location>
</feature>